<gene>
    <name evidence="1" type="primary">coaD</name>
    <name type="ordered locus">SAOUHSC_01075</name>
</gene>
<protein>
    <recommendedName>
        <fullName evidence="1">Phosphopantetheine adenylyltransferase</fullName>
        <ecNumber evidence="1">2.7.7.3</ecNumber>
    </recommendedName>
    <alternativeName>
        <fullName evidence="1">Dephospho-CoA pyrophosphorylase</fullName>
    </alternativeName>
    <alternativeName>
        <fullName evidence="1">Pantetheine-phosphate adenylyltransferase</fullName>
        <shortName evidence="1">PPAT</shortName>
    </alternativeName>
</protein>
<reference key="1">
    <citation type="book" date="2006" name="Gram positive pathogens, 2nd edition">
        <title>The Staphylococcus aureus NCTC 8325 genome.</title>
        <editorList>
            <person name="Fischetti V."/>
            <person name="Novick R."/>
            <person name="Ferretti J."/>
            <person name="Portnoy D."/>
            <person name="Rood J."/>
        </editorList>
        <authorList>
            <person name="Gillaspy A.F."/>
            <person name="Worrell V."/>
            <person name="Orvis J."/>
            <person name="Roe B.A."/>
            <person name="Dyer D.W."/>
            <person name="Iandolo J.J."/>
        </authorList>
    </citation>
    <scope>NUCLEOTIDE SEQUENCE [LARGE SCALE GENOMIC DNA]</scope>
    <source>
        <strain>NCTC 8325 / PS 47</strain>
    </source>
</reference>
<name>COAD_STAA8</name>
<dbReference type="EC" id="2.7.7.3" evidence="1"/>
<dbReference type="EMBL" id="CP000253">
    <property type="protein sequence ID" value="ABD30192.1"/>
    <property type="molecule type" value="Genomic_DNA"/>
</dbReference>
<dbReference type="RefSeq" id="WP_000401377.1">
    <property type="nucleotide sequence ID" value="NZ_LS483365.1"/>
</dbReference>
<dbReference type="RefSeq" id="YP_499621.1">
    <property type="nucleotide sequence ID" value="NC_007795.1"/>
</dbReference>
<dbReference type="SMR" id="Q2FZF5"/>
<dbReference type="STRING" id="93061.SAOUHSC_01075"/>
<dbReference type="PaxDb" id="1280-SAXN108_1120"/>
<dbReference type="GeneID" id="3919238"/>
<dbReference type="GeneID" id="98345441"/>
<dbReference type="KEGG" id="sao:SAOUHSC_01075"/>
<dbReference type="PATRIC" id="fig|93061.5.peg.986"/>
<dbReference type="eggNOG" id="COG0669">
    <property type="taxonomic scope" value="Bacteria"/>
</dbReference>
<dbReference type="HOGENOM" id="CLU_100149_0_1_9"/>
<dbReference type="OrthoDB" id="9806661at2"/>
<dbReference type="UniPathway" id="UPA00241">
    <property type="reaction ID" value="UER00355"/>
</dbReference>
<dbReference type="PRO" id="PR:Q2FZF5"/>
<dbReference type="Proteomes" id="UP000008816">
    <property type="component" value="Chromosome"/>
</dbReference>
<dbReference type="GO" id="GO:0005737">
    <property type="term" value="C:cytoplasm"/>
    <property type="evidence" value="ECO:0007669"/>
    <property type="project" value="UniProtKB-SubCell"/>
</dbReference>
<dbReference type="GO" id="GO:0005524">
    <property type="term" value="F:ATP binding"/>
    <property type="evidence" value="ECO:0007669"/>
    <property type="project" value="UniProtKB-KW"/>
</dbReference>
<dbReference type="GO" id="GO:0004595">
    <property type="term" value="F:pantetheine-phosphate adenylyltransferase activity"/>
    <property type="evidence" value="ECO:0000318"/>
    <property type="project" value="GO_Central"/>
</dbReference>
<dbReference type="GO" id="GO:0015937">
    <property type="term" value="P:coenzyme A biosynthetic process"/>
    <property type="evidence" value="ECO:0000318"/>
    <property type="project" value="GO_Central"/>
</dbReference>
<dbReference type="CDD" id="cd02163">
    <property type="entry name" value="PPAT"/>
    <property type="match status" value="1"/>
</dbReference>
<dbReference type="Gene3D" id="3.40.50.620">
    <property type="entry name" value="HUPs"/>
    <property type="match status" value="1"/>
</dbReference>
<dbReference type="HAMAP" id="MF_00151">
    <property type="entry name" value="PPAT_bact"/>
    <property type="match status" value="1"/>
</dbReference>
<dbReference type="InterPro" id="IPR004821">
    <property type="entry name" value="Cyt_trans-like"/>
</dbReference>
<dbReference type="InterPro" id="IPR001980">
    <property type="entry name" value="PPAT"/>
</dbReference>
<dbReference type="InterPro" id="IPR014729">
    <property type="entry name" value="Rossmann-like_a/b/a_fold"/>
</dbReference>
<dbReference type="NCBIfam" id="TIGR01510">
    <property type="entry name" value="coaD_prev_kdtB"/>
    <property type="match status" value="1"/>
</dbReference>
<dbReference type="NCBIfam" id="TIGR00125">
    <property type="entry name" value="cyt_tran_rel"/>
    <property type="match status" value="1"/>
</dbReference>
<dbReference type="PANTHER" id="PTHR21342">
    <property type="entry name" value="PHOSPHOPANTETHEINE ADENYLYLTRANSFERASE"/>
    <property type="match status" value="1"/>
</dbReference>
<dbReference type="PANTHER" id="PTHR21342:SF1">
    <property type="entry name" value="PHOSPHOPANTETHEINE ADENYLYLTRANSFERASE"/>
    <property type="match status" value="1"/>
</dbReference>
<dbReference type="Pfam" id="PF01467">
    <property type="entry name" value="CTP_transf_like"/>
    <property type="match status" value="1"/>
</dbReference>
<dbReference type="PRINTS" id="PR01020">
    <property type="entry name" value="LPSBIOSNTHSS"/>
</dbReference>
<dbReference type="SUPFAM" id="SSF52374">
    <property type="entry name" value="Nucleotidylyl transferase"/>
    <property type="match status" value="1"/>
</dbReference>
<organism>
    <name type="scientific">Staphylococcus aureus (strain NCTC 8325 / PS 47)</name>
    <dbReference type="NCBI Taxonomy" id="93061"/>
    <lineage>
        <taxon>Bacteria</taxon>
        <taxon>Bacillati</taxon>
        <taxon>Bacillota</taxon>
        <taxon>Bacilli</taxon>
        <taxon>Bacillales</taxon>
        <taxon>Staphylococcaceae</taxon>
        <taxon>Staphylococcus</taxon>
    </lineage>
</organism>
<accession>Q2FZF5</accession>
<evidence type="ECO:0000255" key="1">
    <source>
        <dbReference type="HAMAP-Rule" id="MF_00151"/>
    </source>
</evidence>
<feature type="chain" id="PRO_1000011245" description="Phosphopantetheine adenylyltransferase">
    <location>
        <begin position="1"/>
        <end position="160"/>
    </location>
</feature>
<feature type="binding site" evidence="1">
    <location>
        <begin position="11"/>
        <end position="12"/>
    </location>
    <ligand>
        <name>ATP</name>
        <dbReference type="ChEBI" id="CHEBI:30616"/>
    </ligand>
</feature>
<feature type="binding site" evidence="1">
    <location>
        <position position="11"/>
    </location>
    <ligand>
        <name>substrate</name>
    </ligand>
</feature>
<feature type="binding site" evidence="1">
    <location>
        <position position="19"/>
    </location>
    <ligand>
        <name>ATP</name>
        <dbReference type="ChEBI" id="CHEBI:30616"/>
    </ligand>
</feature>
<feature type="binding site" evidence="1">
    <location>
        <position position="43"/>
    </location>
    <ligand>
        <name>substrate</name>
    </ligand>
</feature>
<feature type="binding site" evidence="1">
    <location>
        <position position="75"/>
    </location>
    <ligand>
        <name>substrate</name>
    </ligand>
</feature>
<feature type="binding site" evidence="1">
    <location>
        <position position="89"/>
    </location>
    <ligand>
        <name>substrate</name>
    </ligand>
</feature>
<feature type="binding site" evidence="1">
    <location>
        <begin position="90"/>
        <end position="92"/>
    </location>
    <ligand>
        <name>ATP</name>
        <dbReference type="ChEBI" id="CHEBI:30616"/>
    </ligand>
</feature>
<feature type="binding site" evidence="1">
    <location>
        <position position="100"/>
    </location>
    <ligand>
        <name>ATP</name>
        <dbReference type="ChEBI" id="CHEBI:30616"/>
    </ligand>
</feature>
<feature type="binding site" evidence="1">
    <location>
        <begin position="125"/>
        <end position="131"/>
    </location>
    <ligand>
        <name>ATP</name>
        <dbReference type="ChEBI" id="CHEBI:30616"/>
    </ligand>
</feature>
<feature type="site" description="Transition state stabilizer" evidence="1">
    <location>
        <position position="19"/>
    </location>
</feature>
<comment type="function">
    <text evidence="1">Reversibly transfers an adenylyl group from ATP to 4'-phosphopantetheine, yielding dephospho-CoA (dPCoA) and pyrophosphate.</text>
</comment>
<comment type="catalytic activity">
    <reaction evidence="1">
        <text>(R)-4'-phosphopantetheine + ATP + H(+) = 3'-dephospho-CoA + diphosphate</text>
        <dbReference type="Rhea" id="RHEA:19801"/>
        <dbReference type="ChEBI" id="CHEBI:15378"/>
        <dbReference type="ChEBI" id="CHEBI:30616"/>
        <dbReference type="ChEBI" id="CHEBI:33019"/>
        <dbReference type="ChEBI" id="CHEBI:57328"/>
        <dbReference type="ChEBI" id="CHEBI:61723"/>
        <dbReference type="EC" id="2.7.7.3"/>
    </reaction>
</comment>
<comment type="cofactor">
    <cofactor evidence="1">
        <name>Mg(2+)</name>
        <dbReference type="ChEBI" id="CHEBI:18420"/>
    </cofactor>
</comment>
<comment type="pathway">
    <text evidence="1">Cofactor biosynthesis; coenzyme A biosynthesis; CoA from (R)-pantothenate: step 4/5.</text>
</comment>
<comment type="subunit">
    <text evidence="1">Homohexamer.</text>
</comment>
<comment type="subcellular location">
    <subcellularLocation>
        <location evidence="1">Cytoplasm</location>
    </subcellularLocation>
</comment>
<comment type="similarity">
    <text evidence="1">Belongs to the bacterial CoaD family.</text>
</comment>
<sequence length="160" mass="18371">MEHTIAVIPGSFDPITYGHLDIIERSTDRFDEIHVCVLKNSKKEGTFSLEERMDLIEQSVKHLPNVKVHQFSGLLVDYCEQVGAKTIIRGLRAVSDFEYELRLTSMNKKLNNEIETLYMMSSTNYSFISSSIVKEVAAYRADISEFVPPYVEKALKKKFK</sequence>
<proteinExistence type="inferred from homology"/>
<keyword id="KW-0067">ATP-binding</keyword>
<keyword id="KW-0173">Coenzyme A biosynthesis</keyword>
<keyword id="KW-0963">Cytoplasm</keyword>
<keyword id="KW-0460">Magnesium</keyword>
<keyword id="KW-0547">Nucleotide-binding</keyword>
<keyword id="KW-0548">Nucleotidyltransferase</keyword>
<keyword id="KW-1185">Reference proteome</keyword>
<keyword id="KW-0808">Transferase</keyword>